<keyword id="KW-0963">Cytoplasm</keyword>
<keyword id="KW-0251">Elongation factor</keyword>
<keyword id="KW-0342">GTP-binding</keyword>
<keyword id="KW-0547">Nucleotide-binding</keyword>
<keyword id="KW-0648">Protein biosynthesis</keyword>
<keyword id="KW-1185">Reference proteome</keyword>
<comment type="function">
    <text evidence="1">Catalyzes the GTP-dependent ribosomal translocation step during translation elongation. During this step, the ribosome changes from the pre-translocational (PRE) to the post-translocational (POST) state as the newly formed A-site-bound peptidyl-tRNA and P-site-bound deacylated tRNA move to the P and E sites, respectively. Catalyzes the coordinated movement of the two tRNA molecules, the mRNA and conformational changes in the ribosome.</text>
</comment>
<comment type="subcellular location">
    <subcellularLocation>
        <location evidence="1">Cytoplasm</location>
    </subcellularLocation>
</comment>
<comment type="similarity">
    <text evidence="1">Belongs to the TRAFAC class translation factor GTPase superfamily. Classic translation factor GTPase family. EF-G/EF-2 subfamily.</text>
</comment>
<gene>
    <name evidence="1" type="primary">fusA1</name>
    <name type="synonym">fusA-1</name>
    <name type="ordered locus">TDE_0285</name>
</gene>
<name>EFG1_TREDE</name>
<organism>
    <name type="scientific">Treponema denticola (strain ATCC 35405 / DSM 14222 / CIP 103919 / JCM 8153 / KCTC 15104)</name>
    <dbReference type="NCBI Taxonomy" id="243275"/>
    <lineage>
        <taxon>Bacteria</taxon>
        <taxon>Pseudomonadati</taxon>
        <taxon>Spirochaetota</taxon>
        <taxon>Spirochaetia</taxon>
        <taxon>Spirochaetales</taxon>
        <taxon>Treponemataceae</taxon>
        <taxon>Treponema</taxon>
    </lineage>
</organism>
<accession>Q73R08</accession>
<proteinExistence type="inferred from homology"/>
<protein>
    <recommendedName>
        <fullName evidence="1">Elongation factor G 1</fullName>
        <shortName evidence="1">EF-G 1</shortName>
    </recommendedName>
</protein>
<sequence length="683" mass="75414">MLDKMRNIGIMAHIDAGKTTTTERILFYTGKIHKIGEIDDGQATMDWMAQEQDRGITIQSAATTTYWKNFQINIIDTPGHVDFTAEVERSLRVLDGAVAVLCAVGGVQPQTETVWHQADRYKVPRICFVNKMDRIGADFFAVLKDVHEKFGVEVMPVQIPIGASDSFEGVIDLIAMKEIHWDAATEGEKYEYTAIAQERLALAEEWREKMLDTISSASDEITELILEGKDVPEELIKKEIRKAVLNQSYIPFLCGSARKNIGVQPLIDAVVDFLPAPNEVLPAEAFNPKKEEKLSVPCKAEGAPLGLVFKIQYDKDAGSLCYVRMYSGKIKSGDQVFNTGKKKRERVNRILRMHSNKSEQMDSVQAGDIAVFIGLKISQTGDTLGSEGQPLLLESMQFPEPVISVSVEPKSLSESDRLKEVLEILSKEDPTFTSREDSETGQLIISGMGELHIDVLTRRMLDDFKVEARVGNPQVTYRESITTEKTQTEKYSKQLGGKDNEAELTLTVRPLERGSGNRFVSKVKTFQKSGSGGTNALPEDLLEAVKRSIEGCFSSGIKVGYPCTDIEVELVSVKYNELTATPFAYEAAAAKCFDDACSAAAPVLLEPVMAVDIMSPKEFVGDAMSQITQRGGLISSMDSKASTDIVHAQAPMAKMFGFSTDLRSATQGRASFTMSFSHFEIKR</sequence>
<reference key="1">
    <citation type="journal article" date="2004" name="Proc. Natl. Acad. Sci. U.S.A.">
        <title>Comparison of the genome of the oral pathogen Treponema denticola with other spirochete genomes.</title>
        <authorList>
            <person name="Seshadri R."/>
            <person name="Myers G.S.A."/>
            <person name="Tettelin H."/>
            <person name="Eisen J.A."/>
            <person name="Heidelberg J.F."/>
            <person name="Dodson R.J."/>
            <person name="Davidsen T.M."/>
            <person name="DeBoy R.T."/>
            <person name="Fouts D.E."/>
            <person name="Haft D.H."/>
            <person name="Selengut J."/>
            <person name="Ren Q."/>
            <person name="Brinkac L.M."/>
            <person name="Madupu R."/>
            <person name="Kolonay J.F."/>
            <person name="Durkin S.A."/>
            <person name="Daugherty S.C."/>
            <person name="Shetty J."/>
            <person name="Shvartsbeyn A."/>
            <person name="Gebregeorgis E."/>
            <person name="Geer K."/>
            <person name="Tsegaye G."/>
            <person name="Malek J.A."/>
            <person name="Ayodeji B."/>
            <person name="Shatsman S."/>
            <person name="McLeod M.P."/>
            <person name="Smajs D."/>
            <person name="Howell J.K."/>
            <person name="Pal S."/>
            <person name="Amin A."/>
            <person name="Vashisth P."/>
            <person name="McNeill T.Z."/>
            <person name="Xiang Q."/>
            <person name="Sodergren E."/>
            <person name="Baca E."/>
            <person name="Weinstock G.M."/>
            <person name="Norris S.J."/>
            <person name="Fraser C.M."/>
            <person name="Paulsen I.T."/>
        </authorList>
    </citation>
    <scope>NUCLEOTIDE SEQUENCE [LARGE SCALE GENOMIC DNA]</scope>
    <source>
        <strain>ATCC 35405 / DSM 14222 / CIP 103919 / JCM 8153 / KCTC 15104</strain>
    </source>
</reference>
<dbReference type="EMBL" id="AE017226">
    <property type="protein sequence ID" value="AAS10780.1"/>
    <property type="molecule type" value="Genomic_DNA"/>
</dbReference>
<dbReference type="RefSeq" id="NP_970899.1">
    <property type="nucleotide sequence ID" value="NC_002967.9"/>
</dbReference>
<dbReference type="SMR" id="Q73R08"/>
<dbReference type="STRING" id="243275.TDE_0285"/>
<dbReference type="PaxDb" id="243275-TDE_0285"/>
<dbReference type="GeneID" id="2741602"/>
<dbReference type="KEGG" id="tde:TDE_0285"/>
<dbReference type="PATRIC" id="fig|243275.7.peg.275"/>
<dbReference type="eggNOG" id="COG0480">
    <property type="taxonomic scope" value="Bacteria"/>
</dbReference>
<dbReference type="HOGENOM" id="CLU_002794_4_1_12"/>
<dbReference type="OrthoDB" id="9804431at2"/>
<dbReference type="Proteomes" id="UP000008212">
    <property type="component" value="Chromosome"/>
</dbReference>
<dbReference type="GO" id="GO:0005737">
    <property type="term" value="C:cytoplasm"/>
    <property type="evidence" value="ECO:0007669"/>
    <property type="project" value="UniProtKB-SubCell"/>
</dbReference>
<dbReference type="GO" id="GO:0005525">
    <property type="term" value="F:GTP binding"/>
    <property type="evidence" value="ECO:0007669"/>
    <property type="project" value="UniProtKB-UniRule"/>
</dbReference>
<dbReference type="GO" id="GO:0003924">
    <property type="term" value="F:GTPase activity"/>
    <property type="evidence" value="ECO:0007669"/>
    <property type="project" value="InterPro"/>
</dbReference>
<dbReference type="GO" id="GO:0003746">
    <property type="term" value="F:translation elongation factor activity"/>
    <property type="evidence" value="ECO:0007669"/>
    <property type="project" value="UniProtKB-UniRule"/>
</dbReference>
<dbReference type="GO" id="GO:0032790">
    <property type="term" value="P:ribosome disassembly"/>
    <property type="evidence" value="ECO:0007669"/>
    <property type="project" value="TreeGrafter"/>
</dbReference>
<dbReference type="CDD" id="cd01886">
    <property type="entry name" value="EF-G"/>
    <property type="match status" value="1"/>
</dbReference>
<dbReference type="CDD" id="cd16262">
    <property type="entry name" value="EFG_III"/>
    <property type="match status" value="1"/>
</dbReference>
<dbReference type="CDD" id="cd01680">
    <property type="entry name" value="EFG_like_IV"/>
    <property type="match status" value="1"/>
</dbReference>
<dbReference type="CDD" id="cd03713">
    <property type="entry name" value="EFG_mtEFG_C"/>
    <property type="match status" value="1"/>
</dbReference>
<dbReference type="CDD" id="cd04088">
    <property type="entry name" value="EFG_mtEFG_II"/>
    <property type="match status" value="1"/>
</dbReference>
<dbReference type="FunFam" id="3.30.70.240:FF:000001">
    <property type="entry name" value="Elongation factor G"/>
    <property type="match status" value="1"/>
</dbReference>
<dbReference type="FunFam" id="3.30.70.870:FF:000001">
    <property type="entry name" value="Elongation factor G"/>
    <property type="match status" value="1"/>
</dbReference>
<dbReference type="FunFam" id="3.40.50.300:FF:000029">
    <property type="entry name" value="Elongation factor G"/>
    <property type="match status" value="1"/>
</dbReference>
<dbReference type="Gene3D" id="3.30.230.10">
    <property type="match status" value="1"/>
</dbReference>
<dbReference type="Gene3D" id="3.30.70.240">
    <property type="match status" value="1"/>
</dbReference>
<dbReference type="Gene3D" id="3.30.70.870">
    <property type="entry name" value="Elongation Factor G (Translational Gtpase), domain 3"/>
    <property type="match status" value="1"/>
</dbReference>
<dbReference type="Gene3D" id="3.40.50.300">
    <property type="entry name" value="P-loop containing nucleotide triphosphate hydrolases"/>
    <property type="match status" value="1"/>
</dbReference>
<dbReference type="Gene3D" id="2.40.30.10">
    <property type="entry name" value="Translation factors"/>
    <property type="match status" value="1"/>
</dbReference>
<dbReference type="HAMAP" id="MF_00054_B">
    <property type="entry name" value="EF_G_EF_2_B"/>
    <property type="match status" value="1"/>
</dbReference>
<dbReference type="InterPro" id="IPR041095">
    <property type="entry name" value="EFG_II"/>
</dbReference>
<dbReference type="InterPro" id="IPR009022">
    <property type="entry name" value="EFG_III"/>
</dbReference>
<dbReference type="InterPro" id="IPR035647">
    <property type="entry name" value="EFG_III/V"/>
</dbReference>
<dbReference type="InterPro" id="IPR035649">
    <property type="entry name" value="EFG_V"/>
</dbReference>
<dbReference type="InterPro" id="IPR000640">
    <property type="entry name" value="EFG_V-like"/>
</dbReference>
<dbReference type="InterPro" id="IPR004161">
    <property type="entry name" value="EFTu-like_2"/>
</dbReference>
<dbReference type="InterPro" id="IPR031157">
    <property type="entry name" value="G_TR_CS"/>
</dbReference>
<dbReference type="InterPro" id="IPR027417">
    <property type="entry name" value="P-loop_NTPase"/>
</dbReference>
<dbReference type="InterPro" id="IPR020568">
    <property type="entry name" value="Ribosomal_Su5_D2-typ_SF"/>
</dbReference>
<dbReference type="InterPro" id="IPR014721">
    <property type="entry name" value="Ribsml_uS5_D2-typ_fold_subgr"/>
</dbReference>
<dbReference type="InterPro" id="IPR005225">
    <property type="entry name" value="Small_GTP-bd"/>
</dbReference>
<dbReference type="InterPro" id="IPR000795">
    <property type="entry name" value="T_Tr_GTP-bd_dom"/>
</dbReference>
<dbReference type="InterPro" id="IPR009000">
    <property type="entry name" value="Transl_B-barrel_sf"/>
</dbReference>
<dbReference type="InterPro" id="IPR004540">
    <property type="entry name" value="Transl_elong_EFG/EF2"/>
</dbReference>
<dbReference type="InterPro" id="IPR005517">
    <property type="entry name" value="Transl_elong_EFG/EF2_IV"/>
</dbReference>
<dbReference type="NCBIfam" id="TIGR00484">
    <property type="entry name" value="EF-G"/>
    <property type="match status" value="1"/>
</dbReference>
<dbReference type="NCBIfam" id="NF009381">
    <property type="entry name" value="PRK12740.1-5"/>
    <property type="match status" value="1"/>
</dbReference>
<dbReference type="NCBIfam" id="TIGR00231">
    <property type="entry name" value="small_GTP"/>
    <property type="match status" value="1"/>
</dbReference>
<dbReference type="PANTHER" id="PTHR43261:SF1">
    <property type="entry name" value="RIBOSOME-RELEASING FACTOR 2, MITOCHONDRIAL"/>
    <property type="match status" value="1"/>
</dbReference>
<dbReference type="PANTHER" id="PTHR43261">
    <property type="entry name" value="TRANSLATION ELONGATION FACTOR G-RELATED"/>
    <property type="match status" value="1"/>
</dbReference>
<dbReference type="Pfam" id="PF00679">
    <property type="entry name" value="EFG_C"/>
    <property type="match status" value="1"/>
</dbReference>
<dbReference type="Pfam" id="PF14492">
    <property type="entry name" value="EFG_III"/>
    <property type="match status" value="1"/>
</dbReference>
<dbReference type="Pfam" id="PF03764">
    <property type="entry name" value="EFG_IV"/>
    <property type="match status" value="1"/>
</dbReference>
<dbReference type="Pfam" id="PF00009">
    <property type="entry name" value="GTP_EFTU"/>
    <property type="match status" value="1"/>
</dbReference>
<dbReference type="Pfam" id="PF03144">
    <property type="entry name" value="GTP_EFTU_D2"/>
    <property type="match status" value="1"/>
</dbReference>
<dbReference type="PRINTS" id="PR00315">
    <property type="entry name" value="ELONGATNFCT"/>
</dbReference>
<dbReference type="SMART" id="SM00838">
    <property type="entry name" value="EFG_C"/>
    <property type="match status" value="1"/>
</dbReference>
<dbReference type="SMART" id="SM00889">
    <property type="entry name" value="EFG_IV"/>
    <property type="match status" value="1"/>
</dbReference>
<dbReference type="SUPFAM" id="SSF54980">
    <property type="entry name" value="EF-G C-terminal domain-like"/>
    <property type="match status" value="2"/>
</dbReference>
<dbReference type="SUPFAM" id="SSF52540">
    <property type="entry name" value="P-loop containing nucleoside triphosphate hydrolases"/>
    <property type="match status" value="1"/>
</dbReference>
<dbReference type="SUPFAM" id="SSF54211">
    <property type="entry name" value="Ribosomal protein S5 domain 2-like"/>
    <property type="match status" value="1"/>
</dbReference>
<dbReference type="SUPFAM" id="SSF50447">
    <property type="entry name" value="Translation proteins"/>
    <property type="match status" value="1"/>
</dbReference>
<dbReference type="PROSITE" id="PS00301">
    <property type="entry name" value="G_TR_1"/>
    <property type="match status" value="1"/>
</dbReference>
<dbReference type="PROSITE" id="PS51722">
    <property type="entry name" value="G_TR_2"/>
    <property type="match status" value="1"/>
</dbReference>
<feature type="chain" id="PRO_0000091252" description="Elongation factor G 1">
    <location>
        <begin position="1"/>
        <end position="683"/>
    </location>
</feature>
<feature type="domain" description="tr-type G">
    <location>
        <begin position="3"/>
        <end position="278"/>
    </location>
</feature>
<feature type="binding site" evidence="1">
    <location>
        <begin position="12"/>
        <end position="19"/>
    </location>
    <ligand>
        <name>GTP</name>
        <dbReference type="ChEBI" id="CHEBI:37565"/>
    </ligand>
</feature>
<feature type="binding site" evidence="1">
    <location>
        <begin position="76"/>
        <end position="80"/>
    </location>
    <ligand>
        <name>GTP</name>
        <dbReference type="ChEBI" id="CHEBI:37565"/>
    </ligand>
</feature>
<feature type="binding site" evidence="1">
    <location>
        <begin position="130"/>
        <end position="133"/>
    </location>
    <ligand>
        <name>GTP</name>
        <dbReference type="ChEBI" id="CHEBI:37565"/>
    </ligand>
</feature>
<evidence type="ECO:0000255" key="1">
    <source>
        <dbReference type="HAMAP-Rule" id="MF_00054"/>
    </source>
</evidence>